<reference key="1">
    <citation type="journal article" date="2012" name="J. Bacteriol.">
        <title>Complete annotated genome sequence of Mycobacterium tuberculosis Erdman.</title>
        <authorList>
            <person name="Miyoshi-Akiyama T."/>
            <person name="Matsumura K."/>
            <person name="Iwai H."/>
            <person name="Funatogawa K."/>
            <person name="Kirikae T."/>
        </authorList>
    </citation>
    <scope>NUCLEOTIDE SEQUENCE [LARGE SCALE GENOMIC DNA]</scope>
    <source>
        <strain>ATCC 35801 / TMC 107 / Erdman</strain>
    </source>
</reference>
<reference key="2">
    <citation type="journal article" date="2005" name="Nature">
        <title>Regulation of Mycobacterium tuberculosis cell envelope composition and virulence by intramembrane proteolysis.</title>
        <authorList>
            <person name="Makinoshima H."/>
            <person name="Glickman M.S."/>
        </authorList>
    </citation>
    <scope>DISRUPTION PHENOTYPE</scope>
    <source>
        <strain>ATCC 35801 / TMC 107 / Erdman</strain>
    </source>
</reference>
<reference key="3">
    <citation type="journal article" date="2010" name="Mol. Microbiol.">
        <title>M. tuberculosis intramembrane protease Rip1 controls transcription through three anti-sigma factor substrates.</title>
        <authorList>
            <person name="Sklar J.G."/>
            <person name="Makinoshima H."/>
            <person name="Schneider J.S."/>
            <person name="Glickman M.S."/>
        </authorList>
    </citation>
    <scope>FUNCTION</scope>
    <scope>SUBSTRATES</scope>
    <scope>DISRUPTION PHENOTYPE</scope>
    <scope>MUTAGENESIS OF HIS-21</scope>
    <source>
        <strain>ATCC 35801 / TMC 107 / Erdman</strain>
    </source>
</reference>
<gene>
    <name type="primary">rip1</name>
    <name type="ordered locus">ERDMAN_3146</name>
</gene>
<name>RIP1_MYCTE</name>
<keyword id="KW-1003">Cell membrane</keyword>
<keyword id="KW-0378">Hydrolase</keyword>
<keyword id="KW-0472">Membrane</keyword>
<keyword id="KW-0479">Metal-binding</keyword>
<keyword id="KW-0482">Metalloprotease</keyword>
<keyword id="KW-0645">Protease</keyword>
<keyword id="KW-0812">Transmembrane</keyword>
<keyword id="KW-1133">Transmembrane helix</keyword>
<keyword id="KW-0843">Virulence</keyword>
<keyword id="KW-0862">Zinc</keyword>
<organism>
    <name type="scientific">Mycobacterium tuberculosis (strain ATCC 35801 / TMC 107 / Erdman)</name>
    <dbReference type="NCBI Taxonomy" id="652616"/>
    <lineage>
        <taxon>Bacteria</taxon>
        <taxon>Bacillati</taxon>
        <taxon>Actinomycetota</taxon>
        <taxon>Actinomycetes</taxon>
        <taxon>Mycobacteriales</taxon>
        <taxon>Mycobacteriaceae</taxon>
        <taxon>Mycobacterium</taxon>
        <taxon>Mycobacterium tuberculosis complex</taxon>
    </lineage>
</organism>
<evidence type="ECO:0000250" key="1"/>
<evidence type="ECO:0000255" key="2"/>
<evidence type="ECO:0000255" key="3">
    <source>
        <dbReference type="PROSITE-ProRule" id="PRU00143"/>
    </source>
</evidence>
<evidence type="ECO:0000269" key="4">
    <source>
    </source>
</evidence>
<evidence type="ECO:0000269" key="5">
    <source>
    </source>
</evidence>
<evidence type="ECO:0000305" key="6"/>
<proteinExistence type="evidence at protein level"/>
<protein>
    <recommendedName>
        <fullName>Zinc metalloprotease Rip1</fullName>
        <ecNumber>3.4.24.-</ecNumber>
    </recommendedName>
    <alternativeName>
        <fullName>Regulator of sigma KLM proteases</fullName>
    </alternativeName>
    <alternativeName>
        <fullName>S2P endopeptidase</fullName>
    </alternativeName>
    <alternativeName>
        <fullName>Site-2-type intramembrane protease</fullName>
    </alternativeName>
    <alternativeName>
        <fullName>site-2 protease Rip1</fullName>
        <shortName>S2P protease Rip1</shortName>
    </alternativeName>
</protein>
<comment type="function">
    <text evidence="5">A probable site-2 protease (S2P) that cleaves type-2 transmembrane proteins within their membrane-spanning domains. Degrades anti-sigma factors RskA, RslA and RsmA, releasing sigma factors SigK, SigL and SigM from the cellular membrane, activating signaling pathways. Does not act on RsdA. Regulates the composition of extractable mycolic acids in the cell envelope in response to changes in membrane fluidity. Mediates transcriptional regulation of mycolic acid biosynthetic genes in response to detergent. Probably also cleaves PbpB (PBP3, FtsI); this cleavage is inhibited by Wag31-PbpBI interaction.</text>
</comment>
<comment type="function">
    <text evidence="5">Regulated intramembrane proteolysis (RIP) occurs when an extracytoplasmic signal (possibly oxidative stress) triggers a concerted proteolytic cascade to transmit information and elicit cellular responses. The membrane-spanning regulatory substrate protein (includes anti-sigma factors RskA, RslA, RsmA, and PbpB) is first cut extracytoplasmically (site-1 protease, S1P), then within the membrane itself (site-2 protease, S2P, this entry), while cytoplasmic proteases finish degrading the regulatory protein, liberating the effector protein (ECF sigma factors SigK, SigL and SigM).</text>
</comment>
<comment type="cofactor">
    <cofactor evidence="1">
        <name>Zn(2+)</name>
        <dbReference type="ChEBI" id="CHEBI:29105"/>
    </cofactor>
</comment>
<comment type="subcellular location">
    <subcellularLocation>
        <location evidence="6">Cell membrane</location>
        <topology evidence="6">Multi-pass membrane protein</topology>
    </subcellularLocation>
</comment>
<comment type="disruption phenotype">
    <text evidence="4 5">Not essential. Altered processing of anti-sigma factors RskA, RslA and RslM. Cells have altered colony morphology, lacking cording associated with virulence. Down-regulates extractable alpha-mycolate synthesis 4.6-fold, methoxymycolates 3.5-fold and ketomycolates 2.3-fold; has no effect on covalently esterified cell wall mycolates. Decreased abundance of hexamannosylated phosphatidylinositol mannoside. Decreased abundance of rpfC. Impairment of bacterial growth in a mouse (C57BL/6) aerosol infection. Bacterial titers in the lung after 3 weeks of infection were about 100-fold lower than in the wild-type; by 22 weeks they are 10,000-fold lower in the lung and fully cleared from the liver.</text>
</comment>
<comment type="similarity">
    <text evidence="6">Belongs to the peptidase M50B family.</text>
</comment>
<dbReference type="EC" id="3.4.24.-"/>
<dbReference type="EMBL" id="AP012340">
    <property type="protein sequence ID" value="BAL66925.1"/>
    <property type="molecule type" value="Genomic_DNA"/>
</dbReference>
<dbReference type="SMR" id="H8EW46"/>
<dbReference type="MEROPS" id="M50.005"/>
<dbReference type="KEGG" id="mtn:ERDMAN_3146"/>
<dbReference type="PATRIC" id="fig|652616.3.peg.3204"/>
<dbReference type="HOGENOM" id="CLU_025778_1_2_11"/>
<dbReference type="GO" id="GO:0005886">
    <property type="term" value="C:plasma membrane"/>
    <property type="evidence" value="ECO:0007669"/>
    <property type="project" value="UniProtKB-SubCell"/>
</dbReference>
<dbReference type="GO" id="GO:0046872">
    <property type="term" value="F:metal ion binding"/>
    <property type="evidence" value="ECO:0007669"/>
    <property type="project" value="UniProtKB-KW"/>
</dbReference>
<dbReference type="GO" id="GO:0004222">
    <property type="term" value="F:metalloendopeptidase activity"/>
    <property type="evidence" value="ECO:0007669"/>
    <property type="project" value="InterPro"/>
</dbReference>
<dbReference type="GO" id="GO:0006508">
    <property type="term" value="P:proteolysis"/>
    <property type="evidence" value="ECO:0007669"/>
    <property type="project" value="UniProtKB-KW"/>
</dbReference>
<dbReference type="CDD" id="cd06163">
    <property type="entry name" value="S2P-M50_PDZ_RseP-like"/>
    <property type="match status" value="1"/>
</dbReference>
<dbReference type="Gene3D" id="2.30.42.10">
    <property type="match status" value="1"/>
</dbReference>
<dbReference type="InterPro" id="IPR001478">
    <property type="entry name" value="PDZ"/>
</dbReference>
<dbReference type="InterPro" id="IPR041489">
    <property type="entry name" value="PDZ_6"/>
</dbReference>
<dbReference type="InterPro" id="IPR036034">
    <property type="entry name" value="PDZ_sf"/>
</dbReference>
<dbReference type="InterPro" id="IPR004387">
    <property type="entry name" value="Pept_M50_Zn"/>
</dbReference>
<dbReference type="InterPro" id="IPR008915">
    <property type="entry name" value="Peptidase_M50"/>
</dbReference>
<dbReference type="PANTHER" id="PTHR42837:SF2">
    <property type="entry name" value="MEMBRANE METALLOPROTEASE ARASP2, CHLOROPLASTIC-RELATED"/>
    <property type="match status" value="1"/>
</dbReference>
<dbReference type="PANTHER" id="PTHR42837">
    <property type="entry name" value="REGULATOR OF SIGMA-E PROTEASE RSEP"/>
    <property type="match status" value="1"/>
</dbReference>
<dbReference type="Pfam" id="PF17820">
    <property type="entry name" value="PDZ_6"/>
    <property type="match status" value="1"/>
</dbReference>
<dbReference type="Pfam" id="PF02163">
    <property type="entry name" value="Peptidase_M50"/>
    <property type="match status" value="1"/>
</dbReference>
<dbReference type="SMART" id="SM00228">
    <property type="entry name" value="PDZ"/>
    <property type="match status" value="1"/>
</dbReference>
<dbReference type="SUPFAM" id="SSF50156">
    <property type="entry name" value="PDZ domain-like"/>
    <property type="match status" value="1"/>
</dbReference>
<dbReference type="PROSITE" id="PS50106">
    <property type="entry name" value="PDZ"/>
    <property type="match status" value="1"/>
</dbReference>
<feature type="chain" id="PRO_0000422674" description="Zinc metalloprotease Rip1">
    <location>
        <begin position="1"/>
        <end position="404"/>
    </location>
</feature>
<feature type="transmembrane region" description="Helical" evidence="2">
    <location>
        <begin position="1"/>
        <end position="21"/>
    </location>
</feature>
<feature type="transmembrane region" description="Helical" evidence="2">
    <location>
        <begin position="104"/>
        <end position="124"/>
    </location>
</feature>
<feature type="transmembrane region" description="Helical" evidence="2">
    <location>
        <begin position="313"/>
        <end position="333"/>
    </location>
</feature>
<feature type="transmembrane region" description="Helical" evidence="2">
    <location>
        <begin position="373"/>
        <end position="393"/>
    </location>
</feature>
<feature type="domain" description="PDZ" evidence="3">
    <location>
        <begin position="121"/>
        <end position="203"/>
    </location>
</feature>
<feature type="active site" evidence="2">
    <location>
        <position position="22"/>
    </location>
</feature>
<feature type="binding site" evidence="1">
    <location>
        <position position="21"/>
    </location>
    <ligand>
        <name>Zn(2+)</name>
        <dbReference type="ChEBI" id="CHEBI:29105"/>
        <note>catalytic</note>
    </ligand>
</feature>
<feature type="binding site" evidence="1">
    <location>
        <position position="25"/>
    </location>
    <ligand>
        <name>Zn(2+)</name>
        <dbReference type="ChEBI" id="CHEBI:29105"/>
        <note>catalytic</note>
    </ligand>
</feature>
<feature type="binding site" evidence="1">
    <location>
        <position position="202"/>
    </location>
    <ligand>
        <name>Zn(2+)</name>
        <dbReference type="ChEBI" id="CHEBI:29105"/>
        <note>catalytic</note>
    </ligand>
</feature>
<feature type="mutagenesis site" description="No cleavage of RskA or RskL." evidence="5">
    <original>H</original>
    <variation>A</variation>
    <location>
        <position position="21"/>
    </location>
</feature>
<accession>H8EW46</accession>
<sequence length="404" mass="42834">MMFVTGIVLFALAILISVALHECGHMWVARRTGMKVRRYFVGFGPTLWSTRRGETEYGVKAVPLGGFCDIAGMTPVEELDPDERDRAMYKQATWKRVAVLFAGPGMNLAICLVLIYAIALVWGLPNLHPPTRAVIGETGCVAQEVSQGKLEQCTGPGPAALAGIRSGDVVVKVGDTPVSSFDEMAAAVRKSHGSVPIVVERDGTAIVTYVDIESTQRWIPNGQGGELQPATVGAIGVGAARVGPVRYGVFSAMPATFAVTGDLTVEVGKALAALPTKVGALVRAIGGGQRDPQTPISVVGASIIGGDTVDHGLWVAFWFFLAQLNLILAAINLLPLLPFDGGHIAVAVFERIRNMVRSARGKVAAAPVNYLKLLPATYVVLVLVVGYMLLTVTADLVNPIRLFQ</sequence>